<name>ENGB_VIBVY</name>
<accession>Q7MQ23</accession>
<keyword id="KW-0131">Cell cycle</keyword>
<keyword id="KW-0132">Cell division</keyword>
<keyword id="KW-0342">GTP-binding</keyword>
<keyword id="KW-0460">Magnesium</keyword>
<keyword id="KW-0479">Metal-binding</keyword>
<keyword id="KW-0547">Nucleotide-binding</keyword>
<keyword id="KW-0717">Septation</keyword>
<evidence type="ECO:0000255" key="1">
    <source>
        <dbReference type="HAMAP-Rule" id="MF_00321"/>
    </source>
</evidence>
<evidence type="ECO:0000305" key="2"/>
<organism>
    <name type="scientific">Vibrio vulnificus (strain YJ016)</name>
    <dbReference type="NCBI Taxonomy" id="196600"/>
    <lineage>
        <taxon>Bacteria</taxon>
        <taxon>Pseudomonadati</taxon>
        <taxon>Pseudomonadota</taxon>
        <taxon>Gammaproteobacteria</taxon>
        <taxon>Vibrionales</taxon>
        <taxon>Vibrionaceae</taxon>
        <taxon>Vibrio</taxon>
    </lineage>
</organism>
<reference key="1">
    <citation type="journal article" date="2003" name="Genome Res.">
        <title>Comparative genome analysis of Vibrio vulnificus, a marine pathogen.</title>
        <authorList>
            <person name="Chen C.-Y."/>
            <person name="Wu K.-M."/>
            <person name="Chang Y.-C."/>
            <person name="Chang C.-H."/>
            <person name="Tsai H.-C."/>
            <person name="Liao T.-L."/>
            <person name="Liu Y.-M."/>
            <person name="Chen H.-J."/>
            <person name="Shen A.B.-T."/>
            <person name="Li J.-C."/>
            <person name="Su T.-L."/>
            <person name="Shao C.-P."/>
            <person name="Lee C.-T."/>
            <person name="Hor L.-I."/>
            <person name="Tsai S.-F."/>
        </authorList>
    </citation>
    <scope>NUCLEOTIDE SEQUENCE [LARGE SCALE GENOMIC DNA]</scope>
    <source>
        <strain>YJ016</strain>
    </source>
</reference>
<dbReference type="EMBL" id="BA000037">
    <property type="protein sequence ID" value="BAC92951.1"/>
    <property type="status" value="ALT_INIT"/>
    <property type="molecule type" value="Genomic_DNA"/>
</dbReference>
<dbReference type="SMR" id="Q7MQ23"/>
<dbReference type="STRING" id="672.VV93_v1c01740"/>
<dbReference type="KEGG" id="vvy:VV0187"/>
<dbReference type="eggNOG" id="COG0218">
    <property type="taxonomic scope" value="Bacteria"/>
</dbReference>
<dbReference type="HOGENOM" id="CLU_033732_1_2_6"/>
<dbReference type="Proteomes" id="UP000002675">
    <property type="component" value="Chromosome I"/>
</dbReference>
<dbReference type="GO" id="GO:0005829">
    <property type="term" value="C:cytosol"/>
    <property type="evidence" value="ECO:0007669"/>
    <property type="project" value="TreeGrafter"/>
</dbReference>
<dbReference type="GO" id="GO:0005525">
    <property type="term" value="F:GTP binding"/>
    <property type="evidence" value="ECO:0007669"/>
    <property type="project" value="UniProtKB-UniRule"/>
</dbReference>
<dbReference type="GO" id="GO:0046872">
    <property type="term" value="F:metal ion binding"/>
    <property type="evidence" value="ECO:0007669"/>
    <property type="project" value="UniProtKB-KW"/>
</dbReference>
<dbReference type="GO" id="GO:0000917">
    <property type="term" value="P:division septum assembly"/>
    <property type="evidence" value="ECO:0007669"/>
    <property type="project" value="UniProtKB-KW"/>
</dbReference>
<dbReference type="CDD" id="cd01876">
    <property type="entry name" value="YihA_EngB"/>
    <property type="match status" value="1"/>
</dbReference>
<dbReference type="FunFam" id="3.40.50.300:FF:000098">
    <property type="entry name" value="Probable GTP-binding protein EngB"/>
    <property type="match status" value="1"/>
</dbReference>
<dbReference type="Gene3D" id="3.40.50.300">
    <property type="entry name" value="P-loop containing nucleotide triphosphate hydrolases"/>
    <property type="match status" value="1"/>
</dbReference>
<dbReference type="HAMAP" id="MF_00321">
    <property type="entry name" value="GTPase_EngB"/>
    <property type="match status" value="1"/>
</dbReference>
<dbReference type="InterPro" id="IPR030393">
    <property type="entry name" value="G_ENGB_dom"/>
</dbReference>
<dbReference type="InterPro" id="IPR006073">
    <property type="entry name" value="GTP-bd"/>
</dbReference>
<dbReference type="InterPro" id="IPR019987">
    <property type="entry name" value="GTP-bd_ribosome_bio_YsxC"/>
</dbReference>
<dbReference type="InterPro" id="IPR027417">
    <property type="entry name" value="P-loop_NTPase"/>
</dbReference>
<dbReference type="NCBIfam" id="TIGR03598">
    <property type="entry name" value="GTPase_YsxC"/>
    <property type="match status" value="1"/>
</dbReference>
<dbReference type="PANTHER" id="PTHR11649:SF13">
    <property type="entry name" value="ENGB-TYPE G DOMAIN-CONTAINING PROTEIN"/>
    <property type="match status" value="1"/>
</dbReference>
<dbReference type="PANTHER" id="PTHR11649">
    <property type="entry name" value="MSS1/TRME-RELATED GTP-BINDING PROTEIN"/>
    <property type="match status" value="1"/>
</dbReference>
<dbReference type="Pfam" id="PF01926">
    <property type="entry name" value="MMR_HSR1"/>
    <property type="match status" value="1"/>
</dbReference>
<dbReference type="SUPFAM" id="SSF52540">
    <property type="entry name" value="P-loop containing nucleoside triphosphate hydrolases"/>
    <property type="match status" value="1"/>
</dbReference>
<dbReference type="PROSITE" id="PS51706">
    <property type="entry name" value="G_ENGB"/>
    <property type="match status" value="1"/>
</dbReference>
<proteinExistence type="inferred from homology"/>
<sequence length="216" mass="24111">MSVKIHYQNTHFITSAPDIRHLPADEGIEIAFAGRSNAGKSSALNRLTNQKNLAKTSKTPGRTQLINLFKVTEGCHIVDLPGYGFAQVPLEMKNKWQKSLGEYLQKRECLKGLVVLMDIRHPMKDLDQQMIFWAIESRIPVQVLLTKADKLKSGARKAELLKVRKLAETFGGDVQVDVYSSLKGLGVDQLRAKLDTWFAPALAHLQEDEEGSNSAE</sequence>
<feature type="chain" id="PRO_0000157800" description="Probable GTP-binding protein EngB">
    <location>
        <begin position="1"/>
        <end position="216"/>
    </location>
</feature>
<feature type="domain" description="EngB-type G" evidence="1">
    <location>
        <begin position="26"/>
        <end position="200"/>
    </location>
</feature>
<feature type="binding site" evidence="1">
    <location>
        <begin position="34"/>
        <end position="41"/>
    </location>
    <ligand>
        <name>GTP</name>
        <dbReference type="ChEBI" id="CHEBI:37565"/>
    </ligand>
</feature>
<feature type="binding site" evidence="1">
    <location>
        <position position="41"/>
    </location>
    <ligand>
        <name>Mg(2+)</name>
        <dbReference type="ChEBI" id="CHEBI:18420"/>
    </ligand>
</feature>
<feature type="binding site" evidence="1">
    <location>
        <begin position="61"/>
        <end position="65"/>
    </location>
    <ligand>
        <name>GTP</name>
        <dbReference type="ChEBI" id="CHEBI:37565"/>
    </ligand>
</feature>
<feature type="binding site" evidence="1">
    <location>
        <position position="63"/>
    </location>
    <ligand>
        <name>Mg(2+)</name>
        <dbReference type="ChEBI" id="CHEBI:18420"/>
    </ligand>
</feature>
<feature type="binding site" evidence="1">
    <location>
        <begin position="79"/>
        <end position="82"/>
    </location>
    <ligand>
        <name>GTP</name>
        <dbReference type="ChEBI" id="CHEBI:37565"/>
    </ligand>
</feature>
<feature type="binding site" evidence="1">
    <location>
        <begin position="146"/>
        <end position="149"/>
    </location>
    <ligand>
        <name>GTP</name>
        <dbReference type="ChEBI" id="CHEBI:37565"/>
    </ligand>
</feature>
<feature type="binding site" evidence="1">
    <location>
        <begin position="179"/>
        <end position="181"/>
    </location>
    <ligand>
        <name>GTP</name>
        <dbReference type="ChEBI" id="CHEBI:37565"/>
    </ligand>
</feature>
<gene>
    <name evidence="1" type="primary">engB</name>
    <name type="ordered locus">VV0187</name>
</gene>
<comment type="function">
    <text evidence="1">Necessary for normal cell division and for the maintenance of normal septation.</text>
</comment>
<comment type="cofactor">
    <cofactor evidence="1">
        <name>Mg(2+)</name>
        <dbReference type="ChEBI" id="CHEBI:18420"/>
    </cofactor>
</comment>
<comment type="similarity">
    <text evidence="1">Belongs to the TRAFAC class TrmE-Era-EngA-EngB-Septin-like GTPase superfamily. EngB GTPase family.</text>
</comment>
<comment type="sequence caution" evidence="2">
    <conflict type="erroneous initiation">
        <sequence resource="EMBL-CDS" id="BAC92951"/>
    </conflict>
</comment>
<protein>
    <recommendedName>
        <fullName evidence="1">Probable GTP-binding protein EngB</fullName>
    </recommendedName>
</protein>